<comment type="function">
    <text evidence="3">Serine protease inhibitor. Inhibits trypsin, elastase, plasmin and kallikrein.</text>
</comment>
<proteinExistence type="evidence at protein level"/>
<organism>
    <name type="scientific">Rhipicephalus sanguineus</name>
    <name type="common">Brown dog tick</name>
    <name type="synonym">Ixodes sanguineus</name>
    <dbReference type="NCBI Taxonomy" id="34632"/>
    <lineage>
        <taxon>Eukaryota</taxon>
        <taxon>Metazoa</taxon>
        <taxon>Ecdysozoa</taxon>
        <taxon>Arthropoda</taxon>
        <taxon>Chelicerata</taxon>
        <taxon>Arachnida</taxon>
        <taxon>Acari</taxon>
        <taxon>Parasitiformes</taxon>
        <taxon>Ixodida</taxon>
        <taxon>Ixodoidea</taxon>
        <taxon>Ixodidae</taxon>
        <taxon>Rhipicephalinae</taxon>
        <taxon>Rhipicephalus</taxon>
        <taxon>Rhipicephalus</taxon>
    </lineage>
</organism>
<name>TIQ7_RHISA</name>
<sequence>EDFDSQCVPTADPGPCKAYIPMWWYNVLS</sequence>
<dbReference type="SMR" id="P84555"/>
<dbReference type="GO" id="GO:0004867">
    <property type="term" value="F:serine-type endopeptidase inhibitor activity"/>
    <property type="evidence" value="ECO:0000314"/>
    <property type="project" value="UniProtKB"/>
</dbReference>
<dbReference type="InterPro" id="IPR036880">
    <property type="entry name" value="Kunitz_BPTI_sf"/>
</dbReference>
<dbReference type="SUPFAM" id="SSF57362">
    <property type="entry name" value="BPTI-like"/>
    <property type="match status" value="1"/>
</dbReference>
<accession>P84555</accession>
<reference evidence="5" key="1">
    <citation type="journal article" date="2003" name="Arch. Biochem. Biophys.">
        <title>Rhipicephalus sanguineus trypsin inhibitors present in the tick larvae: isolation, characterization, and partial primary structure determination.</title>
        <authorList>
            <person name="Sant'Anna Azzolini S."/>
            <person name="Sasaki S.D."/>
            <person name="Torquato R.J.S."/>
            <person name="Andreotti R."/>
            <person name="Andreotti E."/>
            <person name="Tanaka A.S."/>
        </authorList>
    </citation>
    <scope>PROTEIN SEQUENCE</scope>
    <scope>FUNCTION</scope>
    <source>
        <tissue evidence="3">Larva</tissue>
    </source>
</reference>
<protein>
    <recommendedName>
        <fullName>Kunitz-type serine protease inhibitor RsTIQ7</fullName>
    </recommendedName>
</protein>
<keyword id="KW-0903">Direct protein sequencing</keyword>
<keyword id="KW-1015">Disulfide bond</keyword>
<keyword id="KW-0646">Protease inhibitor</keyword>
<keyword id="KW-0722">Serine protease inhibitor</keyword>
<feature type="chain" id="PRO_0000155460" description="Kunitz-type serine protease inhibitor RsTIQ7">
    <location>
        <begin position="1"/>
        <end position="29" status="greater than"/>
    </location>
</feature>
<feature type="domain" description="BPTI/Kunitz inhibitor" evidence="2">
    <location>
        <begin position="6"/>
        <end position="26"/>
    </location>
</feature>
<feature type="site" description="Reactive bond" evidence="1">
    <location>
        <begin position="17"/>
        <end position="18"/>
    </location>
</feature>
<feature type="disulfide bond" evidence="1 2">
    <location>
        <begin position="7"/>
        <end status="unknown"/>
    </location>
</feature>
<feature type="disulfide bond" evidence="1 2">
    <location>
        <begin position="16"/>
        <end status="unknown"/>
    </location>
</feature>
<feature type="non-terminal residue" evidence="4">
    <location>
        <position position="29"/>
    </location>
</feature>
<evidence type="ECO:0000250" key="1">
    <source>
        <dbReference type="UniProtKB" id="P31713"/>
    </source>
</evidence>
<evidence type="ECO:0000255" key="2">
    <source>
        <dbReference type="PROSITE-ProRule" id="PRU00031"/>
    </source>
</evidence>
<evidence type="ECO:0000269" key="3">
    <source>
    </source>
</evidence>
<evidence type="ECO:0000303" key="4">
    <source>
    </source>
</evidence>
<evidence type="ECO:0000305" key="5"/>